<organism>
    <name type="scientific">Streptomyces coelicolor (strain ATCC BAA-471 / A3(2) / M145)</name>
    <dbReference type="NCBI Taxonomy" id="100226"/>
    <lineage>
        <taxon>Bacteria</taxon>
        <taxon>Bacillati</taxon>
        <taxon>Actinomycetota</taxon>
        <taxon>Actinomycetes</taxon>
        <taxon>Kitasatosporales</taxon>
        <taxon>Streptomycetaceae</taxon>
        <taxon>Streptomyces</taxon>
        <taxon>Streptomyces albidoflavus group</taxon>
    </lineage>
</organism>
<dbReference type="EC" id="4.2.1.96"/>
<dbReference type="EMBL" id="AL939128">
    <property type="protein sequence ID" value="CAA20637.1"/>
    <property type="molecule type" value="Genomic_DNA"/>
</dbReference>
<dbReference type="PIR" id="T35232">
    <property type="entry name" value="T35232"/>
</dbReference>
<dbReference type="RefSeq" id="NP_630621.1">
    <property type="nucleotide sequence ID" value="NC_003888.3"/>
</dbReference>
<dbReference type="RefSeq" id="WP_003972439.1">
    <property type="nucleotide sequence ID" value="NZ_VNID01000002.1"/>
</dbReference>
<dbReference type="SMR" id="O86722"/>
<dbReference type="FunCoup" id="O86722">
    <property type="interactions" value="101"/>
</dbReference>
<dbReference type="STRING" id="100226.gene:17764197"/>
<dbReference type="PaxDb" id="100226-SCO6540"/>
<dbReference type="KEGG" id="sco:SCO6540"/>
<dbReference type="PATRIC" id="fig|100226.15.peg.6643"/>
<dbReference type="eggNOG" id="COG2154">
    <property type="taxonomic scope" value="Bacteria"/>
</dbReference>
<dbReference type="HOGENOM" id="CLU_081974_4_3_11"/>
<dbReference type="InParanoid" id="O86722"/>
<dbReference type="OrthoDB" id="15077at2"/>
<dbReference type="PhylomeDB" id="O86722"/>
<dbReference type="Proteomes" id="UP000001973">
    <property type="component" value="Chromosome"/>
</dbReference>
<dbReference type="GO" id="GO:0008124">
    <property type="term" value="F:4-alpha-hydroxytetrahydrobiopterin dehydratase activity"/>
    <property type="evidence" value="ECO:0000318"/>
    <property type="project" value="GO_Central"/>
</dbReference>
<dbReference type="GO" id="GO:0006729">
    <property type="term" value="P:tetrahydrobiopterin biosynthetic process"/>
    <property type="evidence" value="ECO:0007669"/>
    <property type="project" value="InterPro"/>
</dbReference>
<dbReference type="CDD" id="cd00488">
    <property type="entry name" value="PCD_DCoH"/>
    <property type="match status" value="1"/>
</dbReference>
<dbReference type="Gene3D" id="3.30.1360.20">
    <property type="entry name" value="Transcriptional coactivator/pterin dehydratase"/>
    <property type="match status" value="1"/>
</dbReference>
<dbReference type="HAMAP" id="MF_00434">
    <property type="entry name" value="Pterin_4_alpha"/>
    <property type="match status" value="1"/>
</dbReference>
<dbReference type="InterPro" id="IPR036428">
    <property type="entry name" value="PCD_sf"/>
</dbReference>
<dbReference type="InterPro" id="IPR001533">
    <property type="entry name" value="Pterin_deHydtase"/>
</dbReference>
<dbReference type="NCBIfam" id="NF002017">
    <property type="entry name" value="PRK00823.1-2"/>
    <property type="match status" value="1"/>
</dbReference>
<dbReference type="PANTHER" id="PTHR12599">
    <property type="entry name" value="PTERIN-4-ALPHA-CARBINOLAMINE DEHYDRATASE"/>
    <property type="match status" value="1"/>
</dbReference>
<dbReference type="PANTHER" id="PTHR12599:SF0">
    <property type="entry name" value="PTERIN-4-ALPHA-CARBINOLAMINE DEHYDRATASE"/>
    <property type="match status" value="1"/>
</dbReference>
<dbReference type="Pfam" id="PF01329">
    <property type="entry name" value="Pterin_4a"/>
    <property type="match status" value="1"/>
</dbReference>
<dbReference type="SUPFAM" id="SSF55248">
    <property type="entry name" value="PCD-like"/>
    <property type="match status" value="1"/>
</dbReference>
<keyword id="KW-0456">Lyase</keyword>
<keyword id="KW-1185">Reference proteome</keyword>
<gene>
    <name type="ordered locus">SCO6540</name>
    <name type="ORF">SC5C7.25</name>
</gene>
<accession>O86722</accession>
<protein>
    <recommendedName>
        <fullName>Putative pterin-4-alpha-carbinolamine dehydratase</fullName>
        <shortName>PHS</shortName>
        <ecNumber>4.2.1.96</ecNumber>
    </recommendedName>
    <alternativeName>
        <fullName>4-alpha-hydroxy-tetrahydropterin dehydratase</fullName>
    </alternativeName>
    <alternativeName>
        <fullName>Pterin carbinolamine dehydratase</fullName>
        <shortName>PCD</shortName>
    </alternativeName>
</protein>
<name>PHS_STRCO</name>
<evidence type="ECO:0000305" key="1"/>
<reference key="1">
    <citation type="journal article" date="2002" name="Nature">
        <title>Complete genome sequence of the model actinomycete Streptomyces coelicolor A3(2).</title>
        <authorList>
            <person name="Bentley S.D."/>
            <person name="Chater K.F."/>
            <person name="Cerdeno-Tarraga A.-M."/>
            <person name="Challis G.L."/>
            <person name="Thomson N.R."/>
            <person name="James K.D."/>
            <person name="Harris D.E."/>
            <person name="Quail M.A."/>
            <person name="Kieser H."/>
            <person name="Harper D."/>
            <person name="Bateman A."/>
            <person name="Brown S."/>
            <person name="Chandra G."/>
            <person name="Chen C.W."/>
            <person name="Collins M."/>
            <person name="Cronin A."/>
            <person name="Fraser A."/>
            <person name="Goble A."/>
            <person name="Hidalgo J."/>
            <person name="Hornsby T."/>
            <person name="Howarth S."/>
            <person name="Huang C.-H."/>
            <person name="Kieser T."/>
            <person name="Larke L."/>
            <person name="Murphy L.D."/>
            <person name="Oliver K."/>
            <person name="O'Neil S."/>
            <person name="Rabbinowitsch E."/>
            <person name="Rajandream M.A."/>
            <person name="Rutherford K.M."/>
            <person name="Rutter S."/>
            <person name="Seeger K."/>
            <person name="Saunders D."/>
            <person name="Sharp S."/>
            <person name="Squares R."/>
            <person name="Squares S."/>
            <person name="Taylor K."/>
            <person name="Warren T."/>
            <person name="Wietzorrek A."/>
            <person name="Woodward J.R."/>
            <person name="Barrell B.G."/>
            <person name="Parkhill J."/>
            <person name="Hopwood D.A."/>
        </authorList>
    </citation>
    <scope>NUCLEOTIDE SEQUENCE [LARGE SCALE GENOMIC DNA]</scope>
    <source>
        <strain>ATCC BAA-471 / A3(2) / M145</strain>
    </source>
</reference>
<comment type="catalytic activity">
    <reaction>
        <text>(4aS,6R)-4a-hydroxy-L-erythro-5,6,7,8-tetrahydrobiopterin = (6R)-L-erythro-6,7-dihydrobiopterin + H2O</text>
        <dbReference type="Rhea" id="RHEA:11920"/>
        <dbReference type="ChEBI" id="CHEBI:15377"/>
        <dbReference type="ChEBI" id="CHEBI:15642"/>
        <dbReference type="ChEBI" id="CHEBI:43120"/>
        <dbReference type="EC" id="4.2.1.96"/>
    </reaction>
</comment>
<comment type="similarity">
    <text evidence="1">Belongs to the pterin-4-alpha-carbinolamine dehydratase family.</text>
</comment>
<sequence length="101" mass="10822">MPAEPLSPQEVEERLATLPGWSLDAGRLTRSYRLGSHFAAAAMVVHVAQVQEELDHHSDLTLGYHTVALAVHTHSAGGAVTEKDVELARRVEDLAAGHGAH</sequence>
<feature type="chain" id="PRO_0000063097" description="Putative pterin-4-alpha-carbinolamine dehydratase">
    <location>
        <begin position="1"/>
        <end position="101"/>
    </location>
</feature>
<proteinExistence type="inferred from homology"/>